<proteinExistence type="inferred from homology"/>
<protein>
    <recommendedName>
        <fullName evidence="1">2,3-dihydroxyphenylpropionate/2,3-dihydroxicinnamic acid 1,2-dioxygenase</fullName>
        <ecNumber evidence="1">1.13.11.16</ecNumber>
    </recommendedName>
    <alternativeName>
        <fullName evidence="1">3-carboxyethylcatechol 2,3-dioxygenase</fullName>
    </alternativeName>
</protein>
<comment type="function">
    <text evidence="1">Catalyzes the non-heme iron(II)-dependent oxidative cleavage of 2,3-dihydroxyphenylpropionic acid and 2,3-dihydroxicinnamic acid into 2-hydroxy-6-ketononadienedioate and 2-hydroxy-6-ketononatrienedioate, respectively.</text>
</comment>
<comment type="catalytic activity">
    <reaction evidence="1">
        <text>3-(2,3-dihydroxyphenyl)propanoate + O2 = (2Z,4E)-2-hydroxy-6-oxonona-2,4-dienedioate + H(+)</text>
        <dbReference type="Rhea" id="RHEA:23840"/>
        <dbReference type="ChEBI" id="CHEBI:15378"/>
        <dbReference type="ChEBI" id="CHEBI:15379"/>
        <dbReference type="ChEBI" id="CHEBI:46951"/>
        <dbReference type="ChEBI" id="CHEBI:66887"/>
        <dbReference type="EC" id="1.13.11.16"/>
    </reaction>
</comment>
<comment type="catalytic activity">
    <reaction evidence="1">
        <text>(2E)-3-(2,3-dihydroxyphenyl)prop-2-enoate + O2 = (2Z,4E,7E)-2-hydroxy-6-oxonona-2,4,7-trienedioate + H(+)</text>
        <dbReference type="Rhea" id="RHEA:25054"/>
        <dbReference type="ChEBI" id="CHEBI:15378"/>
        <dbReference type="ChEBI" id="CHEBI:15379"/>
        <dbReference type="ChEBI" id="CHEBI:58642"/>
        <dbReference type="ChEBI" id="CHEBI:66888"/>
        <dbReference type="EC" id="1.13.11.16"/>
    </reaction>
</comment>
<comment type="cofactor">
    <cofactor evidence="1">
        <name>Fe(2+)</name>
        <dbReference type="ChEBI" id="CHEBI:29033"/>
    </cofactor>
</comment>
<comment type="pathway">
    <text evidence="1">Aromatic compound metabolism; 3-phenylpropanoate degradation.</text>
</comment>
<comment type="subunit">
    <text evidence="1">Homotetramer.</text>
</comment>
<comment type="similarity">
    <text evidence="1">Belongs to the LigB/MhpB extradiol dioxygenase family.</text>
</comment>
<reference key="1">
    <citation type="journal article" date="2004" name="Biosci. Biotechnol. Biochem.">
        <title>Multiplicity of 2,3-dihydroxybiphenyl dioxygenase genes in the Gram-positive polychlorinated biphenyl degrading bacterium Rhodococcus rhodochrous K37.</title>
        <authorList>
            <person name="Taguchi K."/>
            <person name="Motoyama M."/>
            <person name="Kudo T."/>
        </authorList>
    </citation>
    <scope>NUCLEOTIDE SEQUENCE [GENOMIC DNA]</scope>
    <source>
        <strain>K37</strain>
    </source>
</reference>
<keyword id="KW-0058">Aromatic hydrocarbons catabolism</keyword>
<keyword id="KW-0223">Dioxygenase</keyword>
<keyword id="KW-0408">Iron</keyword>
<keyword id="KW-0560">Oxidoreductase</keyword>
<sequence length="316" mass="34533">MTQALLCMSHSPLLDHATPPAEVKSAVDDAFARARDFVEAFDPELVVNFGPDHFNGFFYDLMPPFCIGYRAHGTGDYDSFAGDLDVPEDVAADLAQFVLDHGSDVAISRHMEVDHGAVQPMEILHGGDAGARPILPVFVNSIARPFVPMSRVRAFGHAVGDFFAGTDKRVLFLGSGGLSHDPPVPQFATATASQREFLTSGRNPPPEARPARQARTIETARRFAAGEAEIMDLNPEWDRAFLDVCRSGRVEDFDRYTADEMDAAAGHSSHEVRTWVAAYSALRACGEYDVTYEFYRPIKEYIAGFAVTTAQLAGEA</sequence>
<gene>
    <name evidence="1" type="primary">mhpB</name>
    <name type="synonym">bphC3</name>
</gene>
<evidence type="ECO:0000255" key="1">
    <source>
        <dbReference type="HAMAP-Rule" id="MF_01653"/>
    </source>
</evidence>
<accession>Q762H5</accession>
<organism>
    <name type="scientific">Rhodococcus rhodochrous</name>
    <dbReference type="NCBI Taxonomy" id="1829"/>
    <lineage>
        <taxon>Bacteria</taxon>
        <taxon>Bacillati</taxon>
        <taxon>Actinomycetota</taxon>
        <taxon>Actinomycetes</taxon>
        <taxon>Mycobacteriales</taxon>
        <taxon>Nocardiaceae</taxon>
        <taxon>Rhodococcus</taxon>
    </lineage>
</organism>
<name>MHPB_RHORH</name>
<dbReference type="EC" id="1.13.11.16" evidence="1"/>
<dbReference type="EMBL" id="AB117721">
    <property type="protein sequence ID" value="BAD10895.1"/>
    <property type="molecule type" value="Genomic_DNA"/>
</dbReference>
<dbReference type="SMR" id="Q762H5"/>
<dbReference type="UniPathway" id="UPA00714"/>
<dbReference type="GO" id="GO:0047070">
    <property type="term" value="F:3-carboxyethylcatechol 2,3-dioxygenase activity"/>
    <property type="evidence" value="ECO:0007669"/>
    <property type="project" value="UniProtKB-UniRule"/>
</dbReference>
<dbReference type="GO" id="GO:0008198">
    <property type="term" value="F:ferrous iron binding"/>
    <property type="evidence" value="ECO:0007669"/>
    <property type="project" value="InterPro"/>
</dbReference>
<dbReference type="GO" id="GO:0019380">
    <property type="term" value="P:3-phenylpropionate catabolic process"/>
    <property type="evidence" value="ECO:0007669"/>
    <property type="project" value="UniProtKB-UniRule"/>
</dbReference>
<dbReference type="CDD" id="cd07365">
    <property type="entry name" value="MhpB_like"/>
    <property type="match status" value="1"/>
</dbReference>
<dbReference type="Gene3D" id="3.40.830.10">
    <property type="entry name" value="LigB-like"/>
    <property type="match status" value="1"/>
</dbReference>
<dbReference type="HAMAP" id="MF_01653">
    <property type="entry name" value="MhpB"/>
    <property type="match status" value="1"/>
</dbReference>
<dbReference type="InterPro" id="IPR023789">
    <property type="entry name" value="DHPP/DHXA_dioxygenase"/>
</dbReference>
<dbReference type="InterPro" id="IPR004183">
    <property type="entry name" value="Xdiol_dOase_suB"/>
</dbReference>
<dbReference type="NCBIfam" id="NF009910">
    <property type="entry name" value="PRK13370.1-4"/>
    <property type="match status" value="1"/>
</dbReference>
<dbReference type="Pfam" id="PF02900">
    <property type="entry name" value="LigB"/>
    <property type="match status" value="1"/>
</dbReference>
<dbReference type="SUPFAM" id="SSF53213">
    <property type="entry name" value="LigB-like"/>
    <property type="match status" value="1"/>
</dbReference>
<feature type="chain" id="PRO_0000337666" description="2,3-dihydroxyphenylpropionate/2,3-dihydroxicinnamic acid 1,2-dioxygenase">
    <location>
        <begin position="1"/>
        <end position="316"/>
    </location>
</feature>
<feature type="active site" description="Proton donor" evidence="1">
    <location>
        <position position="115"/>
    </location>
</feature>
<feature type="active site" description="Proton acceptor" evidence="1">
    <location>
        <position position="180"/>
    </location>
</feature>